<organism>
    <name type="scientific">Methanococcus maripaludis (strain C7 / ATCC BAA-1331)</name>
    <dbReference type="NCBI Taxonomy" id="426368"/>
    <lineage>
        <taxon>Archaea</taxon>
        <taxon>Methanobacteriati</taxon>
        <taxon>Methanobacteriota</taxon>
        <taxon>Methanomada group</taxon>
        <taxon>Methanococci</taxon>
        <taxon>Methanococcales</taxon>
        <taxon>Methanococcaceae</taxon>
        <taxon>Methanococcus</taxon>
    </lineage>
</organism>
<gene>
    <name evidence="2" type="primary">arfB</name>
    <name type="ordered locus">MmarC7_0980</name>
</gene>
<feature type="chain" id="PRO_0000406928" description="2-amino-5-formylamino-6-ribosylaminopyrimidin-4(3H)-one 5'-monophosphate deformylase">
    <location>
        <begin position="1"/>
        <end position="221"/>
    </location>
</feature>
<feature type="binding site" evidence="2">
    <location>
        <position position="29"/>
    </location>
    <ligand>
        <name>Fe cation</name>
        <dbReference type="ChEBI" id="CHEBI:24875"/>
        <label>1</label>
    </ligand>
</feature>
<feature type="binding site" evidence="2">
    <location>
        <position position="31"/>
    </location>
    <ligand>
        <name>Fe cation</name>
        <dbReference type="ChEBI" id="CHEBI:24875"/>
        <label>2</label>
    </ligand>
</feature>
<feature type="binding site" evidence="2">
    <location>
        <position position="40"/>
    </location>
    <ligand>
        <name>Fe cation</name>
        <dbReference type="ChEBI" id="CHEBI:24875"/>
        <label>1</label>
    </ligand>
</feature>
<feature type="binding site" evidence="2">
    <location>
        <position position="40"/>
    </location>
    <ligand>
        <name>Fe cation</name>
        <dbReference type="ChEBI" id="CHEBI:24875"/>
        <label>2</label>
    </ligand>
</feature>
<feature type="binding site" evidence="2">
    <location>
        <position position="108"/>
    </location>
    <ligand>
        <name>Fe cation</name>
        <dbReference type="ChEBI" id="CHEBI:24875"/>
        <label>1</label>
    </ligand>
</feature>
<proteinExistence type="inferred from homology"/>
<name>ARFB_METM7</name>
<comment type="function">
    <text evidence="2">Catalyzes the hydrolysis of the formamide of 2-amino-5-formylamino-6-ribosylamino-4(3H)-pyrimidinone 5'-monophosphate (FAPy) to form 2,5-diamino-6-ribosylamino-4(3H)-pyrimidinone 5'-phosphate (APy).</text>
</comment>
<comment type="catalytic activity">
    <reaction evidence="2">
        <text>2-amino-5-formylamino-6-(5-phospho-D-ribosylamino)pyrimidin-4(3H)-one + H2O = 2,5-diamino-6-(1-D-ribosylamino)pyrimidin-4(3H)-one 5'-phosphate + formate + H(+)</text>
        <dbReference type="Rhea" id="RHEA:27282"/>
        <dbReference type="ChEBI" id="CHEBI:15377"/>
        <dbReference type="ChEBI" id="CHEBI:15378"/>
        <dbReference type="ChEBI" id="CHEBI:15740"/>
        <dbReference type="ChEBI" id="CHEBI:57258"/>
        <dbReference type="ChEBI" id="CHEBI:59545"/>
        <dbReference type="EC" id="3.5.1.102"/>
    </reaction>
</comment>
<comment type="cofactor">
    <cofactor evidence="1">
        <name>Fe(2+)</name>
        <dbReference type="ChEBI" id="CHEBI:29033"/>
    </cofactor>
    <text evidence="1">Requires one Fe(2+) ion for activity.</text>
</comment>
<comment type="cofactor">
    <cofactor evidence="1">
        <name>Fe(2+)</name>
        <dbReference type="ChEBI" id="CHEBI:29033"/>
    </cofactor>
    <cofactor evidence="1">
        <name>Zn(2+)</name>
        <dbReference type="ChEBI" id="CHEBI:29105"/>
    </cofactor>
    <text evidence="1">Requires an additional second metal ion that could be Fe(2+) or Zn(2+).</text>
</comment>
<comment type="pathway">
    <text evidence="2">Cofactor biosynthesis; coenzyme F420 biosynthesis.</text>
</comment>
<comment type="pathway">
    <text evidence="2">Cofactor biosynthesis; riboflavin biosynthesis.</text>
</comment>
<comment type="subunit">
    <text evidence="2">Homodimer.</text>
</comment>
<comment type="similarity">
    <text evidence="2">Belongs to the creatininase superfamily. FAPy deformylase family.</text>
</comment>
<keyword id="KW-0378">Hydrolase</keyword>
<keyword id="KW-0408">Iron</keyword>
<keyword id="KW-0479">Metal-binding</keyword>
<keyword id="KW-0862">Zinc</keyword>
<sequence>MVDLRYGSGNIFNEKVHGIGIIALGSFLENHGSALPIDTDAKIASYIALNVSIITGAKFLGVVLPSTEYSYVKHGIHDSIKDVINYIKYLVENGRKIGINKFLIINCHGGNTLIKDEISKLNHENCFIRMENVCLTHAATDEVSLGYAVGILSEDKMKTHDPEIYEEIGMVGLKEAREKNEAIDLEARSVEENGVFLDRTHGRFLLNELINNYVEIVRNMI</sequence>
<accession>A6VHX1</accession>
<protein>
    <recommendedName>
        <fullName evidence="2">2-amino-5-formylamino-6-ribosylaminopyrimidin-4(3H)-one 5'-monophosphate deformylase</fullName>
        <shortName evidence="2">FAPy deformylase</shortName>
        <ecNumber evidence="2">3.5.1.102</ecNumber>
    </recommendedName>
    <alternativeName>
        <fullName evidence="2">Formamide hydrolase</fullName>
    </alternativeName>
</protein>
<dbReference type="EC" id="3.5.1.102" evidence="2"/>
<dbReference type="EMBL" id="CP000745">
    <property type="protein sequence ID" value="ABR66047.1"/>
    <property type="molecule type" value="Genomic_DNA"/>
</dbReference>
<dbReference type="SMR" id="A6VHX1"/>
<dbReference type="STRING" id="426368.MmarC7_0980"/>
<dbReference type="KEGG" id="mmz:MmarC7_0980"/>
<dbReference type="eggNOG" id="arCOG04536">
    <property type="taxonomic scope" value="Archaea"/>
</dbReference>
<dbReference type="HOGENOM" id="CLU_1192640_0_0_2"/>
<dbReference type="OrthoDB" id="46121at2157"/>
<dbReference type="UniPathway" id="UPA00071"/>
<dbReference type="UniPathway" id="UPA00275"/>
<dbReference type="GO" id="GO:0043729">
    <property type="term" value="F:2-amino-5-formylamino-6-(5-phosphoribosylamino)pyrimidin-4(3H)-one formate-lyase activity"/>
    <property type="evidence" value="ECO:0007669"/>
    <property type="project" value="UniProtKB-EC"/>
</dbReference>
<dbReference type="GO" id="GO:0008198">
    <property type="term" value="F:ferrous iron binding"/>
    <property type="evidence" value="ECO:0007669"/>
    <property type="project" value="UniProtKB-UniRule"/>
</dbReference>
<dbReference type="GO" id="GO:0052645">
    <property type="term" value="P:F420-0 metabolic process"/>
    <property type="evidence" value="ECO:0007669"/>
    <property type="project" value="UniProtKB-UniRule"/>
</dbReference>
<dbReference type="GO" id="GO:0009231">
    <property type="term" value="P:riboflavin biosynthetic process"/>
    <property type="evidence" value="ECO:0007669"/>
    <property type="project" value="UniProtKB-UniRule"/>
</dbReference>
<dbReference type="Gene3D" id="3.40.50.10310">
    <property type="entry name" value="Creatininase"/>
    <property type="match status" value="1"/>
</dbReference>
<dbReference type="HAMAP" id="MF_02116">
    <property type="entry name" value="FAPy_deform"/>
    <property type="match status" value="1"/>
</dbReference>
<dbReference type="InterPro" id="IPR024087">
    <property type="entry name" value="Creatininase-like_sf"/>
</dbReference>
<dbReference type="InterPro" id="IPR003785">
    <property type="entry name" value="Creatininase/forma_Hydrolase"/>
</dbReference>
<dbReference type="InterPro" id="IPR024901">
    <property type="entry name" value="FAPy_deformylase"/>
</dbReference>
<dbReference type="NCBIfam" id="NF033501">
    <property type="entry name" value="ArfB_arch_rifla"/>
    <property type="match status" value="1"/>
</dbReference>
<dbReference type="PANTHER" id="PTHR35005:SF1">
    <property type="entry name" value="2-AMINO-5-FORMYLAMINO-6-RIBOSYLAMINOPYRIMIDIN-4(3H)-ONE 5'-MONOPHOSPHATE DEFORMYLASE"/>
    <property type="match status" value="1"/>
</dbReference>
<dbReference type="PANTHER" id="PTHR35005">
    <property type="entry name" value="3-DEHYDRO-SCYLLO-INOSOSE HYDROLASE"/>
    <property type="match status" value="1"/>
</dbReference>
<dbReference type="Pfam" id="PF02633">
    <property type="entry name" value="Creatininase"/>
    <property type="match status" value="1"/>
</dbReference>
<dbReference type="SUPFAM" id="SSF102215">
    <property type="entry name" value="Creatininase"/>
    <property type="match status" value="1"/>
</dbReference>
<reference key="1">
    <citation type="submission" date="2007-06" db="EMBL/GenBank/DDBJ databases">
        <title>Complete sequence of Methanococcus maripaludis C7.</title>
        <authorList>
            <consortium name="US DOE Joint Genome Institute"/>
            <person name="Copeland A."/>
            <person name="Lucas S."/>
            <person name="Lapidus A."/>
            <person name="Barry K."/>
            <person name="Glavina del Rio T."/>
            <person name="Dalin E."/>
            <person name="Tice H."/>
            <person name="Pitluck S."/>
            <person name="Clum A."/>
            <person name="Schmutz J."/>
            <person name="Larimer F."/>
            <person name="Land M."/>
            <person name="Hauser L."/>
            <person name="Kyrpides N."/>
            <person name="Anderson I."/>
            <person name="Sieprawska-Lupa M."/>
            <person name="Whitman W.B."/>
            <person name="Richardson P."/>
        </authorList>
    </citation>
    <scope>NUCLEOTIDE SEQUENCE [LARGE SCALE GENOMIC DNA]</scope>
    <source>
        <strain>C7 / ATCC BAA-1331</strain>
    </source>
</reference>
<evidence type="ECO:0000250" key="1"/>
<evidence type="ECO:0000255" key="2">
    <source>
        <dbReference type="HAMAP-Rule" id="MF_02116"/>
    </source>
</evidence>